<organism>
    <name type="scientific">Dictyostelium discoideum</name>
    <name type="common">Social amoeba</name>
    <dbReference type="NCBI Taxonomy" id="44689"/>
    <lineage>
        <taxon>Eukaryota</taxon>
        <taxon>Amoebozoa</taxon>
        <taxon>Evosea</taxon>
        <taxon>Eumycetozoa</taxon>
        <taxon>Dictyostelia</taxon>
        <taxon>Dictyosteliales</taxon>
        <taxon>Dictyosteliaceae</taxon>
        <taxon>Dictyostelium</taxon>
    </lineage>
</organism>
<dbReference type="EC" id="3.1.3.48"/>
<dbReference type="EMBL" id="AB039883">
    <property type="protein sequence ID" value="BAC66469.2"/>
    <property type="status" value="ALT_SEQ"/>
    <property type="molecule type" value="Genomic_DNA"/>
</dbReference>
<dbReference type="EMBL" id="AAFI02000056">
    <property type="protein sequence ID" value="EAL65575.1"/>
    <property type="molecule type" value="Genomic_DNA"/>
</dbReference>
<dbReference type="RefSeq" id="XP_638997.1">
    <property type="nucleotide sequence ID" value="XM_633905.1"/>
</dbReference>
<dbReference type="SMR" id="Q54QM6"/>
<dbReference type="FunCoup" id="Q54QM6">
    <property type="interactions" value="792"/>
</dbReference>
<dbReference type="STRING" id="44689.Q54QM6"/>
<dbReference type="GlyGen" id="Q54QM6">
    <property type="glycosylation" value="2 sites"/>
</dbReference>
<dbReference type="PaxDb" id="44689-DDB0191424"/>
<dbReference type="EnsemblProtists" id="EAL65575">
    <property type="protein sequence ID" value="EAL65575"/>
    <property type="gene ID" value="DDB_G0283617"/>
</dbReference>
<dbReference type="GeneID" id="8624243"/>
<dbReference type="KEGG" id="ddi:DDB_G0283617"/>
<dbReference type="dictyBase" id="DDB_G0283617">
    <property type="gene designation" value="cdc25"/>
</dbReference>
<dbReference type="VEuPathDB" id="AmoebaDB:DDB_G0283617"/>
<dbReference type="eggNOG" id="KOG3772">
    <property type="taxonomic scope" value="Eukaryota"/>
</dbReference>
<dbReference type="HOGENOM" id="CLU_290614_0_0_1"/>
<dbReference type="InParanoid" id="Q54QM6"/>
<dbReference type="OMA" id="RTCLDFT"/>
<dbReference type="Reactome" id="R-DDI-156711">
    <property type="pathway name" value="Polo-like kinase mediated events"/>
</dbReference>
<dbReference type="Reactome" id="R-DDI-5625740">
    <property type="pathway name" value="RHO GTPases activate PKNs"/>
</dbReference>
<dbReference type="Reactome" id="R-DDI-5689880">
    <property type="pathway name" value="Ub-specific processing proteases"/>
</dbReference>
<dbReference type="Reactome" id="R-DDI-6804115">
    <property type="pathway name" value="TP53 regulates transcription of additional cell cycle genes whose exact role in the p53 pathway remain uncertain"/>
</dbReference>
<dbReference type="Reactome" id="R-DDI-69273">
    <property type="pathway name" value="Cyclin A/B1/B2 associated events during G2/M transition"/>
</dbReference>
<dbReference type="Reactome" id="R-DDI-69601">
    <property type="pathway name" value="Ubiquitin Mediated Degradation of Phosphorylated Cdc25A"/>
</dbReference>
<dbReference type="Reactome" id="R-DDI-75035">
    <property type="pathway name" value="Chk1/Chk2(Cds1) mediated inactivation of Cyclin B:Cdk1 complex"/>
</dbReference>
<dbReference type="PRO" id="PR:Q54QM6"/>
<dbReference type="Proteomes" id="UP000002195">
    <property type="component" value="Chromosome 4"/>
</dbReference>
<dbReference type="GO" id="GO:0005737">
    <property type="term" value="C:cytoplasm"/>
    <property type="evidence" value="ECO:0000318"/>
    <property type="project" value="GO_Central"/>
</dbReference>
<dbReference type="GO" id="GO:0005634">
    <property type="term" value="C:nucleus"/>
    <property type="evidence" value="ECO:0000318"/>
    <property type="project" value="GO_Central"/>
</dbReference>
<dbReference type="GO" id="GO:0004725">
    <property type="term" value="F:protein tyrosine phosphatase activity"/>
    <property type="evidence" value="ECO:0000250"/>
    <property type="project" value="dictyBase"/>
</dbReference>
<dbReference type="GO" id="GO:0051301">
    <property type="term" value="P:cell division"/>
    <property type="evidence" value="ECO:0007669"/>
    <property type="project" value="UniProtKB-KW"/>
</dbReference>
<dbReference type="GO" id="GO:0000086">
    <property type="term" value="P:G2/M transition of mitotic cell cycle"/>
    <property type="evidence" value="ECO:0000318"/>
    <property type="project" value="GO_Central"/>
</dbReference>
<dbReference type="GO" id="GO:0010971">
    <property type="term" value="P:positive regulation of G2/M transition of mitotic cell cycle"/>
    <property type="evidence" value="ECO:0000318"/>
    <property type="project" value="GO_Central"/>
</dbReference>
<dbReference type="GO" id="GO:0110032">
    <property type="term" value="P:positive regulation of G2/MI transition of meiotic cell cycle"/>
    <property type="evidence" value="ECO:0000318"/>
    <property type="project" value="GO_Central"/>
</dbReference>
<dbReference type="CDD" id="cd01530">
    <property type="entry name" value="Cdc25"/>
    <property type="match status" value="1"/>
</dbReference>
<dbReference type="FunFam" id="3.40.250.10:FF:000071">
    <property type="entry name" value="Rodhanase family domain containing protein"/>
    <property type="match status" value="1"/>
</dbReference>
<dbReference type="Gene3D" id="3.40.250.10">
    <property type="entry name" value="Rhodanese-like domain"/>
    <property type="match status" value="1"/>
</dbReference>
<dbReference type="InterPro" id="IPR000751">
    <property type="entry name" value="MPI_Phosphatase"/>
</dbReference>
<dbReference type="InterPro" id="IPR001763">
    <property type="entry name" value="Rhodanese-like_dom"/>
</dbReference>
<dbReference type="InterPro" id="IPR036873">
    <property type="entry name" value="Rhodanese-like_dom_sf"/>
</dbReference>
<dbReference type="PANTHER" id="PTHR10828">
    <property type="entry name" value="M-PHASE INDUCER PHOSPHATASE DUAL SPECIFICITY PHOSPHATASE CDC25"/>
    <property type="match status" value="1"/>
</dbReference>
<dbReference type="PANTHER" id="PTHR10828:SF17">
    <property type="entry name" value="PROTEIN-TYROSINE-PHOSPHATASE"/>
    <property type="match status" value="1"/>
</dbReference>
<dbReference type="Pfam" id="PF00581">
    <property type="entry name" value="Rhodanese"/>
    <property type="match status" value="1"/>
</dbReference>
<dbReference type="PRINTS" id="PR00716">
    <property type="entry name" value="MPIPHPHTASE"/>
</dbReference>
<dbReference type="SMART" id="SM00450">
    <property type="entry name" value="RHOD"/>
    <property type="match status" value="1"/>
</dbReference>
<dbReference type="SUPFAM" id="SSF52821">
    <property type="entry name" value="Rhodanese/Cell cycle control phosphatase"/>
    <property type="match status" value="1"/>
</dbReference>
<dbReference type="PROSITE" id="PS50206">
    <property type="entry name" value="RHODANESE_3"/>
    <property type="match status" value="1"/>
</dbReference>
<protein>
    <recommendedName>
        <fullName>M-phase inducer phosphatase</fullName>
        <ecNumber>3.1.3.48</ecNumber>
    </recommendedName>
    <alternativeName>
        <fullName>Dual specificity phosphatase cdc25</fullName>
    </alternativeName>
</protein>
<sequence>MGPTENQSFEIEFPNSSNTAAANSISTAINNNTTTAATITFTPANNNINNINNNNNNNNNNKFNSNFDIESNKENSINQSNINSNVNSFPLKIQTKTLNSTTTSSNNNNNNIFSIGFRPLSPRGVSPRFHSNSSSSCSSEISTPSSSTFLEDPNLIASNTISSNNSINNNNNNNNNNNNNNNNNNNDNSNNNINTNNINNNNNNTNNGENPQKKQRNSQILSKNFYSLSLHADSPKHSRSTTDLSTFLGMSDPDVMTYRSKTFCISDFHQFDIDTTTNDNKNKNNNTKSTDESSTFDGKSSNSVENNNMTIINNNNNNNNNNNNNNNNNNNNNNLNQDRPTIPTVAHSLSSNSIPHKFNSSNSLPPQMLSSSAPSLFSLLENSNNNNNNNNNNNNNNNNNNNNNNNNDNSNISINDESIVLISTPVKEYSYNRSLCLSDEEGGEDDEDDTPPTPIQLVRPTPTPINPSLSLSLSSSLNATNSTTYLHLGRSATVLLNPPLLVSSMRQHHNSPSSSPSQSIPIVQTRERSQSSLSFLSPYQQQYYPSSPELSPMVPTPLVNRIFNNINNNNNNNNNNNNNNNNNNNNNNNNNNNNNNNGTNSNNLNNQSTSEDRDDSPNTSLDQISGSPYKTPSKLSFHSPNSSAIFNSISNSQQTGKRSRTCLDFTKFSSHLLDEDSSCFSTQTNNNNTSSTGLISPSSSPKQQNVLIENTTNTTSNSSSSSSSTTTTTTTISVTNTLAAIQQNLNSNANLNNNNNNNNNNNNNISSYFSRSNSISSQRPPRPLSMSSSFISRQSPDIHISSNSLPKPVDTSNTNNNNENENDTNKLDKINNVNSNIAKIIEQQQQRNISNSNNNNNLTQDQDQQDDQFKAKLLKQLSGRQGYNGVSSESVYELLKNPTLINAIITVVDCRYKYEYDGGHIKNAINIPPTGSRQMVLDRFFKFPTPKNQQHVIIFHCEFSSKRAPDCYSLFRELDREHNEYPNIHYPEIYLLNGGYKKFFESFQGDMCEGNYIRMDDKLYQANLKEEEEKKKKEKITIRNIKAFKNRSHSFHV</sequence>
<evidence type="ECO:0000250" key="1"/>
<evidence type="ECO:0000255" key="2">
    <source>
        <dbReference type="PROSITE-ProRule" id="PRU00173"/>
    </source>
</evidence>
<evidence type="ECO:0000256" key="3">
    <source>
        <dbReference type="SAM" id="MobiDB-lite"/>
    </source>
</evidence>
<evidence type="ECO:0000269" key="4">
    <source>
    </source>
</evidence>
<evidence type="ECO:0000305" key="5"/>
<evidence type="ECO:0000305" key="6">
    <source>
    </source>
</evidence>
<name>MPIP_DICDI</name>
<accession>Q54QM6</accession>
<accession>Q86M49</accession>
<gene>
    <name type="primary">cdc25</name>
    <name type="ORF">DDB_G0283617</name>
</gene>
<proteinExistence type="evidence at protein level"/>
<feature type="chain" id="PRO_0000327912" description="M-phase inducer phosphatase">
    <location>
        <begin position="1"/>
        <end position="1053"/>
    </location>
</feature>
<feature type="domain" description="Rhodanese" evidence="2">
    <location>
        <begin position="901"/>
        <end position="1001"/>
    </location>
</feature>
<feature type="region of interest" description="Disordered" evidence="3">
    <location>
        <begin position="125"/>
        <end position="217"/>
    </location>
</feature>
<feature type="region of interest" description="Disordered" evidence="3">
    <location>
        <begin position="231"/>
        <end position="253"/>
    </location>
</feature>
<feature type="region of interest" description="Disordered" evidence="3">
    <location>
        <begin position="273"/>
        <end position="412"/>
    </location>
</feature>
<feature type="region of interest" description="Disordered" evidence="3">
    <location>
        <begin position="438"/>
        <end position="466"/>
    </location>
</feature>
<feature type="region of interest" description="Disordered" evidence="3">
    <location>
        <begin position="504"/>
        <end position="532"/>
    </location>
</feature>
<feature type="region of interest" description="Disordered" evidence="3">
    <location>
        <begin position="562"/>
        <end position="638"/>
    </location>
</feature>
<feature type="region of interest" description="Disordered" evidence="3">
    <location>
        <begin position="684"/>
        <end position="703"/>
    </location>
</feature>
<feature type="region of interest" description="Disordered" evidence="3">
    <location>
        <begin position="747"/>
        <end position="829"/>
    </location>
</feature>
<feature type="compositionally biased region" description="Low complexity" evidence="3">
    <location>
        <begin position="131"/>
        <end position="147"/>
    </location>
</feature>
<feature type="compositionally biased region" description="Low complexity" evidence="3">
    <location>
        <begin position="158"/>
        <end position="207"/>
    </location>
</feature>
<feature type="compositionally biased region" description="Low complexity" evidence="3">
    <location>
        <begin position="274"/>
        <end position="295"/>
    </location>
</feature>
<feature type="compositionally biased region" description="Polar residues" evidence="3">
    <location>
        <begin position="296"/>
        <end position="305"/>
    </location>
</feature>
<feature type="compositionally biased region" description="Low complexity" evidence="3">
    <location>
        <begin position="306"/>
        <end position="336"/>
    </location>
</feature>
<feature type="compositionally biased region" description="Polar residues" evidence="3">
    <location>
        <begin position="347"/>
        <end position="365"/>
    </location>
</feature>
<feature type="compositionally biased region" description="Low complexity" evidence="3">
    <location>
        <begin position="369"/>
        <end position="412"/>
    </location>
</feature>
<feature type="compositionally biased region" description="Acidic residues" evidence="3">
    <location>
        <begin position="438"/>
        <end position="450"/>
    </location>
</feature>
<feature type="compositionally biased region" description="Low complexity" evidence="3">
    <location>
        <begin position="511"/>
        <end position="522"/>
    </location>
</feature>
<feature type="compositionally biased region" description="Low complexity" evidence="3">
    <location>
        <begin position="564"/>
        <end position="606"/>
    </location>
</feature>
<feature type="compositionally biased region" description="Polar residues" evidence="3">
    <location>
        <begin position="617"/>
        <end position="638"/>
    </location>
</feature>
<feature type="compositionally biased region" description="Low complexity" evidence="3">
    <location>
        <begin position="684"/>
        <end position="701"/>
    </location>
</feature>
<feature type="compositionally biased region" description="Low complexity" evidence="3">
    <location>
        <begin position="747"/>
        <end position="777"/>
    </location>
</feature>
<feature type="compositionally biased region" description="Polar residues" evidence="3">
    <location>
        <begin position="785"/>
        <end position="805"/>
    </location>
</feature>
<feature type="active site" description="Cysteine persulfide intermediate" evidence="2">
    <location>
        <position position="957"/>
    </location>
</feature>
<comment type="function">
    <text evidence="1">Tyrosine protein phosphatase which may function as a dosage-dependent inducer in mitotic control.</text>
</comment>
<comment type="catalytic activity">
    <reaction>
        <text>O-phospho-L-tyrosyl-[protein] + H2O = L-tyrosyl-[protein] + phosphate</text>
        <dbReference type="Rhea" id="RHEA:10684"/>
        <dbReference type="Rhea" id="RHEA-COMP:10136"/>
        <dbReference type="Rhea" id="RHEA-COMP:20101"/>
        <dbReference type="ChEBI" id="CHEBI:15377"/>
        <dbReference type="ChEBI" id="CHEBI:43474"/>
        <dbReference type="ChEBI" id="CHEBI:46858"/>
        <dbReference type="ChEBI" id="CHEBI:61978"/>
        <dbReference type="EC" id="3.1.3.48"/>
    </reaction>
</comment>
<comment type="developmental stage">
    <text evidence="4">Present at all developmental stages (at protein level).</text>
</comment>
<comment type="PTM">
    <text evidence="6">Phosphorylated.</text>
</comment>
<comment type="similarity">
    <text evidence="5">Belongs to the MPI phosphatase family.</text>
</comment>
<comment type="caution">
    <text evidence="5">The protein might be post-translationally truncated or the gene model could be wrong, because experimentally the protein migrates like a 56 kDa protein whereas it should migrate around 117 kDa.</text>
</comment>
<comment type="sequence caution" evidence="5">
    <conflict type="erroneous gene model prediction">
        <sequence resource="EMBL-CDS" id="BAC66469"/>
    </conflict>
</comment>
<keyword id="KW-0131">Cell cycle</keyword>
<keyword id="KW-0132">Cell division</keyword>
<keyword id="KW-0378">Hydrolase</keyword>
<keyword id="KW-0498">Mitosis</keyword>
<keyword id="KW-0597">Phosphoprotein</keyword>
<keyword id="KW-0904">Protein phosphatase</keyword>
<keyword id="KW-1185">Reference proteome</keyword>
<reference key="1">
    <citation type="journal article" date="2004" name="Dev. Genes Evol.">
        <title>Cloning, sequencing, and expression of the genomic DNA encoding the protein phosphatase cdc25 in Dictyostelium discoideum.</title>
        <authorList>
            <person name="Mayanagi T."/>
            <person name="Maeda Y."/>
            <person name="Hirose S."/>
            <person name="Arakane T."/>
            <person name="Araki T."/>
            <person name="Amagai A."/>
        </authorList>
    </citation>
    <scope>NUCLEOTIDE SEQUENCE [GENOMIC DNA]</scope>
    <scope>DEVELOPMENTAL STAGE</scope>
    <scope>PHOSPHORYLATION</scope>
    <source>
        <strain>AX2</strain>
    </source>
</reference>
<reference key="2">
    <citation type="journal article" date="2005" name="Nature">
        <title>The genome of the social amoeba Dictyostelium discoideum.</title>
        <authorList>
            <person name="Eichinger L."/>
            <person name="Pachebat J.A."/>
            <person name="Gloeckner G."/>
            <person name="Rajandream M.A."/>
            <person name="Sucgang R."/>
            <person name="Berriman M."/>
            <person name="Song J."/>
            <person name="Olsen R."/>
            <person name="Szafranski K."/>
            <person name="Xu Q."/>
            <person name="Tunggal B."/>
            <person name="Kummerfeld S."/>
            <person name="Madera M."/>
            <person name="Konfortov B.A."/>
            <person name="Rivero F."/>
            <person name="Bankier A.T."/>
            <person name="Lehmann R."/>
            <person name="Hamlin N."/>
            <person name="Davies R."/>
            <person name="Gaudet P."/>
            <person name="Fey P."/>
            <person name="Pilcher K."/>
            <person name="Chen G."/>
            <person name="Saunders D."/>
            <person name="Sodergren E.J."/>
            <person name="Davis P."/>
            <person name="Kerhornou A."/>
            <person name="Nie X."/>
            <person name="Hall N."/>
            <person name="Anjard C."/>
            <person name="Hemphill L."/>
            <person name="Bason N."/>
            <person name="Farbrother P."/>
            <person name="Desany B."/>
            <person name="Just E."/>
            <person name="Morio T."/>
            <person name="Rost R."/>
            <person name="Churcher C.M."/>
            <person name="Cooper J."/>
            <person name="Haydock S."/>
            <person name="van Driessche N."/>
            <person name="Cronin A."/>
            <person name="Goodhead I."/>
            <person name="Muzny D.M."/>
            <person name="Mourier T."/>
            <person name="Pain A."/>
            <person name="Lu M."/>
            <person name="Harper D."/>
            <person name="Lindsay R."/>
            <person name="Hauser H."/>
            <person name="James K.D."/>
            <person name="Quiles M."/>
            <person name="Madan Babu M."/>
            <person name="Saito T."/>
            <person name="Buchrieser C."/>
            <person name="Wardroper A."/>
            <person name="Felder M."/>
            <person name="Thangavelu M."/>
            <person name="Johnson D."/>
            <person name="Knights A."/>
            <person name="Loulseged H."/>
            <person name="Mungall K.L."/>
            <person name="Oliver K."/>
            <person name="Price C."/>
            <person name="Quail M.A."/>
            <person name="Urushihara H."/>
            <person name="Hernandez J."/>
            <person name="Rabbinowitsch E."/>
            <person name="Steffen D."/>
            <person name="Sanders M."/>
            <person name="Ma J."/>
            <person name="Kohara Y."/>
            <person name="Sharp S."/>
            <person name="Simmonds M.N."/>
            <person name="Spiegler S."/>
            <person name="Tivey A."/>
            <person name="Sugano S."/>
            <person name="White B."/>
            <person name="Walker D."/>
            <person name="Woodward J.R."/>
            <person name="Winckler T."/>
            <person name="Tanaka Y."/>
            <person name="Shaulsky G."/>
            <person name="Schleicher M."/>
            <person name="Weinstock G.M."/>
            <person name="Rosenthal A."/>
            <person name="Cox E.C."/>
            <person name="Chisholm R.L."/>
            <person name="Gibbs R.A."/>
            <person name="Loomis W.F."/>
            <person name="Platzer M."/>
            <person name="Kay R.R."/>
            <person name="Williams J.G."/>
            <person name="Dear P.H."/>
            <person name="Noegel A.A."/>
            <person name="Barrell B.G."/>
            <person name="Kuspa A."/>
        </authorList>
    </citation>
    <scope>NUCLEOTIDE SEQUENCE [LARGE SCALE GENOMIC DNA]</scope>
    <source>
        <strain>AX4</strain>
    </source>
</reference>